<evidence type="ECO:0000255" key="1">
    <source>
        <dbReference type="HAMAP-Rule" id="MF_00051"/>
    </source>
</evidence>
<dbReference type="EC" id="2.1.2.1" evidence="1"/>
<dbReference type="EMBL" id="CP000896">
    <property type="protein sequence ID" value="ABX80689.1"/>
    <property type="molecule type" value="Genomic_DNA"/>
</dbReference>
<dbReference type="RefSeq" id="WP_012242020.1">
    <property type="nucleotide sequence ID" value="NC_010163.1"/>
</dbReference>
<dbReference type="SMR" id="A9NEA9"/>
<dbReference type="STRING" id="441768.ACL_0047"/>
<dbReference type="GeneID" id="41338251"/>
<dbReference type="KEGG" id="acl:ACL_0047"/>
<dbReference type="eggNOG" id="COG0112">
    <property type="taxonomic scope" value="Bacteria"/>
</dbReference>
<dbReference type="HOGENOM" id="CLU_022477_2_1_14"/>
<dbReference type="OrthoDB" id="9803846at2"/>
<dbReference type="UniPathway" id="UPA00193"/>
<dbReference type="UniPathway" id="UPA00288">
    <property type="reaction ID" value="UER01023"/>
</dbReference>
<dbReference type="Proteomes" id="UP000008558">
    <property type="component" value="Chromosome"/>
</dbReference>
<dbReference type="GO" id="GO:0005829">
    <property type="term" value="C:cytosol"/>
    <property type="evidence" value="ECO:0007669"/>
    <property type="project" value="TreeGrafter"/>
</dbReference>
<dbReference type="GO" id="GO:0004372">
    <property type="term" value="F:glycine hydroxymethyltransferase activity"/>
    <property type="evidence" value="ECO:0007669"/>
    <property type="project" value="UniProtKB-UniRule"/>
</dbReference>
<dbReference type="GO" id="GO:0030170">
    <property type="term" value="F:pyridoxal phosphate binding"/>
    <property type="evidence" value="ECO:0007669"/>
    <property type="project" value="UniProtKB-UniRule"/>
</dbReference>
<dbReference type="GO" id="GO:0019264">
    <property type="term" value="P:glycine biosynthetic process from serine"/>
    <property type="evidence" value="ECO:0007669"/>
    <property type="project" value="UniProtKB-UniRule"/>
</dbReference>
<dbReference type="GO" id="GO:0035999">
    <property type="term" value="P:tetrahydrofolate interconversion"/>
    <property type="evidence" value="ECO:0007669"/>
    <property type="project" value="UniProtKB-UniRule"/>
</dbReference>
<dbReference type="CDD" id="cd00378">
    <property type="entry name" value="SHMT"/>
    <property type="match status" value="1"/>
</dbReference>
<dbReference type="FunFam" id="3.40.640.10:FF:000001">
    <property type="entry name" value="Serine hydroxymethyltransferase"/>
    <property type="match status" value="1"/>
</dbReference>
<dbReference type="Gene3D" id="3.90.1150.10">
    <property type="entry name" value="Aspartate Aminotransferase, domain 1"/>
    <property type="match status" value="1"/>
</dbReference>
<dbReference type="Gene3D" id="3.40.640.10">
    <property type="entry name" value="Type I PLP-dependent aspartate aminotransferase-like (Major domain)"/>
    <property type="match status" value="1"/>
</dbReference>
<dbReference type="HAMAP" id="MF_00051">
    <property type="entry name" value="SHMT"/>
    <property type="match status" value="1"/>
</dbReference>
<dbReference type="InterPro" id="IPR015424">
    <property type="entry name" value="PyrdxlP-dep_Trfase"/>
</dbReference>
<dbReference type="InterPro" id="IPR015421">
    <property type="entry name" value="PyrdxlP-dep_Trfase_major"/>
</dbReference>
<dbReference type="InterPro" id="IPR015422">
    <property type="entry name" value="PyrdxlP-dep_Trfase_small"/>
</dbReference>
<dbReference type="InterPro" id="IPR001085">
    <property type="entry name" value="Ser_HO-MeTrfase"/>
</dbReference>
<dbReference type="InterPro" id="IPR049943">
    <property type="entry name" value="Ser_HO-MeTrfase-like"/>
</dbReference>
<dbReference type="InterPro" id="IPR019798">
    <property type="entry name" value="Ser_HO-MeTrfase_PLP_BS"/>
</dbReference>
<dbReference type="InterPro" id="IPR039429">
    <property type="entry name" value="SHMT-like_dom"/>
</dbReference>
<dbReference type="NCBIfam" id="NF000586">
    <property type="entry name" value="PRK00011.1"/>
    <property type="match status" value="1"/>
</dbReference>
<dbReference type="PANTHER" id="PTHR11680">
    <property type="entry name" value="SERINE HYDROXYMETHYLTRANSFERASE"/>
    <property type="match status" value="1"/>
</dbReference>
<dbReference type="PANTHER" id="PTHR11680:SF35">
    <property type="entry name" value="SERINE HYDROXYMETHYLTRANSFERASE 1"/>
    <property type="match status" value="1"/>
</dbReference>
<dbReference type="Pfam" id="PF00464">
    <property type="entry name" value="SHMT"/>
    <property type="match status" value="1"/>
</dbReference>
<dbReference type="PIRSF" id="PIRSF000412">
    <property type="entry name" value="SHMT"/>
    <property type="match status" value="1"/>
</dbReference>
<dbReference type="SUPFAM" id="SSF53383">
    <property type="entry name" value="PLP-dependent transferases"/>
    <property type="match status" value="1"/>
</dbReference>
<dbReference type="PROSITE" id="PS00096">
    <property type="entry name" value="SHMT"/>
    <property type="match status" value="1"/>
</dbReference>
<protein>
    <recommendedName>
        <fullName evidence="1">Serine hydroxymethyltransferase</fullName>
        <shortName evidence="1">SHMT</shortName>
        <shortName evidence="1">Serine methylase</shortName>
        <ecNumber evidence="1">2.1.2.1</ecNumber>
    </recommendedName>
</protein>
<gene>
    <name evidence="1" type="primary">glyA</name>
    <name type="ordered locus">ACL_0047</name>
</gene>
<organism>
    <name type="scientific">Acholeplasma laidlawii (strain PG-8A)</name>
    <dbReference type="NCBI Taxonomy" id="441768"/>
    <lineage>
        <taxon>Bacteria</taxon>
        <taxon>Bacillati</taxon>
        <taxon>Mycoplasmatota</taxon>
        <taxon>Mollicutes</taxon>
        <taxon>Acholeplasmatales</taxon>
        <taxon>Acholeplasmataceae</taxon>
        <taxon>Acholeplasma</taxon>
    </lineage>
</organism>
<proteinExistence type="inferred from homology"/>
<keyword id="KW-0028">Amino-acid biosynthesis</keyword>
<keyword id="KW-0963">Cytoplasm</keyword>
<keyword id="KW-0554">One-carbon metabolism</keyword>
<keyword id="KW-0663">Pyridoxal phosphate</keyword>
<keyword id="KW-1185">Reference proteome</keyword>
<keyword id="KW-0808">Transferase</keyword>
<comment type="function">
    <text evidence="1">Catalyzes the reversible interconversion of serine and glycine with tetrahydrofolate (THF) serving as the one-carbon carrier. This reaction serves as the major source of one-carbon groups required for the biosynthesis of purines, thymidylate, methionine, and other important biomolecules. Also exhibits THF-independent aldolase activity toward beta-hydroxyamino acids, producing glycine and aldehydes, via a retro-aldol mechanism.</text>
</comment>
<comment type="catalytic activity">
    <reaction evidence="1">
        <text>(6R)-5,10-methylene-5,6,7,8-tetrahydrofolate + glycine + H2O = (6S)-5,6,7,8-tetrahydrofolate + L-serine</text>
        <dbReference type="Rhea" id="RHEA:15481"/>
        <dbReference type="ChEBI" id="CHEBI:15377"/>
        <dbReference type="ChEBI" id="CHEBI:15636"/>
        <dbReference type="ChEBI" id="CHEBI:33384"/>
        <dbReference type="ChEBI" id="CHEBI:57305"/>
        <dbReference type="ChEBI" id="CHEBI:57453"/>
        <dbReference type="EC" id="2.1.2.1"/>
    </reaction>
</comment>
<comment type="cofactor">
    <cofactor evidence="1">
        <name>pyridoxal 5'-phosphate</name>
        <dbReference type="ChEBI" id="CHEBI:597326"/>
    </cofactor>
</comment>
<comment type="pathway">
    <text evidence="1">One-carbon metabolism; tetrahydrofolate interconversion.</text>
</comment>
<comment type="pathway">
    <text evidence="1">Amino-acid biosynthesis; glycine biosynthesis; glycine from L-serine: step 1/1.</text>
</comment>
<comment type="subunit">
    <text evidence="1">Homodimer.</text>
</comment>
<comment type="subcellular location">
    <subcellularLocation>
        <location evidence="1">Cytoplasm</location>
    </subcellularLocation>
</comment>
<comment type="similarity">
    <text evidence="1">Belongs to the SHMT family.</text>
</comment>
<feature type="chain" id="PRO_0000369893" description="Serine hydroxymethyltransferase">
    <location>
        <begin position="1"/>
        <end position="409"/>
    </location>
</feature>
<feature type="binding site" evidence="1">
    <location>
        <position position="116"/>
    </location>
    <ligand>
        <name>(6S)-5,6,7,8-tetrahydrofolate</name>
        <dbReference type="ChEBI" id="CHEBI:57453"/>
    </ligand>
</feature>
<feature type="binding site" evidence="1">
    <location>
        <begin position="120"/>
        <end position="122"/>
    </location>
    <ligand>
        <name>(6S)-5,6,7,8-tetrahydrofolate</name>
        <dbReference type="ChEBI" id="CHEBI:57453"/>
    </ligand>
</feature>
<feature type="site" description="Plays an important role in substrate specificity" evidence="1">
    <location>
        <position position="224"/>
    </location>
</feature>
<feature type="modified residue" description="N6-(pyridoxal phosphate)lysine" evidence="1">
    <location>
        <position position="225"/>
    </location>
</feature>
<sequence length="409" mass="45324">MTLKDYDLELFNAIQREDNRQKEHIELIASENFVSDAVLEAQGSILTNKYAEGYPNKRYYGGCEFVDQVEILAQDRLKQIFNAKFVNVQPHSGSQANAAVYQALLSPGDRVLGMDLNAGGHLTHGYKLSFSGHYYEAHAYGVSRFDERIDYEEVLKIAIEVKPKMIIAGASAYPRVIDFKKFREIADTVGAYLFVDMAHIAGLVACGLHPSPLPYADVVTSTTHKTLRGPRGGIILTNDASIAKKIDRAVFPGQQGGPLMHIIAAKAVAFKEALDPNFKVYQTQVIKNAKALSDTFKSLGYKLISDGTDNHLILVDVKSKLGITGRDAEDALYKANITINKNQLPFDQEKPMLTSGIRLGTPAMTTKGFKENEFIKVAQLIDEVLSNINNEEVINKVKKEVLKLMKDVK</sequence>
<name>GLYA_ACHLI</name>
<accession>A9NEA9</accession>
<reference key="1">
    <citation type="journal article" date="2011" name="J. Bacteriol.">
        <title>Complete genome and proteome of Acholeplasma laidlawii.</title>
        <authorList>
            <person name="Lazarev V.N."/>
            <person name="Levitskii S.A."/>
            <person name="Basovskii Y.I."/>
            <person name="Chukin M.M."/>
            <person name="Akopian T.A."/>
            <person name="Vereshchagin V.V."/>
            <person name="Kostrjukova E.S."/>
            <person name="Kovaleva G.Y."/>
            <person name="Kazanov M.D."/>
            <person name="Malko D.B."/>
            <person name="Vitreschak A.G."/>
            <person name="Sernova N.V."/>
            <person name="Gelfand M.S."/>
            <person name="Demina I.A."/>
            <person name="Serebryakova M.V."/>
            <person name="Galyamina M.A."/>
            <person name="Vtyurin N.N."/>
            <person name="Rogov S.I."/>
            <person name="Alexeev D.G."/>
            <person name="Ladygina V.G."/>
            <person name="Govorun V.M."/>
        </authorList>
    </citation>
    <scope>NUCLEOTIDE SEQUENCE [LARGE SCALE GENOMIC DNA]</scope>
    <source>
        <strain>PG-8A</strain>
    </source>
</reference>